<proteinExistence type="inferred from homology"/>
<dbReference type="EC" id="6.5.1.2" evidence="1"/>
<dbReference type="EMBL" id="CP000570">
    <property type="protein sequence ID" value="ABN84746.1"/>
    <property type="molecule type" value="Genomic_DNA"/>
</dbReference>
<dbReference type="RefSeq" id="WP_011851818.1">
    <property type="nucleotide sequence ID" value="NC_009074.1"/>
</dbReference>
<dbReference type="SMR" id="A3NAV3"/>
<dbReference type="KEGG" id="bpd:BURPS668_2442"/>
<dbReference type="HOGENOM" id="CLU_007764_2_1_4"/>
<dbReference type="GO" id="GO:0005829">
    <property type="term" value="C:cytosol"/>
    <property type="evidence" value="ECO:0007669"/>
    <property type="project" value="TreeGrafter"/>
</dbReference>
<dbReference type="GO" id="GO:0003677">
    <property type="term" value="F:DNA binding"/>
    <property type="evidence" value="ECO:0007669"/>
    <property type="project" value="InterPro"/>
</dbReference>
<dbReference type="GO" id="GO:0003911">
    <property type="term" value="F:DNA ligase (NAD+) activity"/>
    <property type="evidence" value="ECO:0007669"/>
    <property type="project" value="UniProtKB-UniRule"/>
</dbReference>
<dbReference type="GO" id="GO:0046872">
    <property type="term" value="F:metal ion binding"/>
    <property type="evidence" value="ECO:0007669"/>
    <property type="project" value="UniProtKB-KW"/>
</dbReference>
<dbReference type="GO" id="GO:0006281">
    <property type="term" value="P:DNA repair"/>
    <property type="evidence" value="ECO:0007669"/>
    <property type="project" value="UniProtKB-KW"/>
</dbReference>
<dbReference type="GO" id="GO:0006260">
    <property type="term" value="P:DNA replication"/>
    <property type="evidence" value="ECO:0007669"/>
    <property type="project" value="UniProtKB-KW"/>
</dbReference>
<dbReference type="CDD" id="cd17748">
    <property type="entry name" value="BRCT_DNA_ligase_like"/>
    <property type="match status" value="1"/>
</dbReference>
<dbReference type="CDD" id="cd00114">
    <property type="entry name" value="LIGANc"/>
    <property type="match status" value="1"/>
</dbReference>
<dbReference type="FunFam" id="1.10.150.20:FF:000006">
    <property type="entry name" value="DNA ligase"/>
    <property type="match status" value="1"/>
</dbReference>
<dbReference type="FunFam" id="1.10.150.20:FF:000007">
    <property type="entry name" value="DNA ligase"/>
    <property type="match status" value="1"/>
</dbReference>
<dbReference type="FunFam" id="1.10.287.610:FF:000002">
    <property type="entry name" value="DNA ligase"/>
    <property type="match status" value="1"/>
</dbReference>
<dbReference type="FunFam" id="2.40.50.140:FF:000012">
    <property type="entry name" value="DNA ligase"/>
    <property type="match status" value="1"/>
</dbReference>
<dbReference type="FunFam" id="3.30.470.30:FF:000001">
    <property type="entry name" value="DNA ligase"/>
    <property type="match status" value="1"/>
</dbReference>
<dbReference type="FunFam" id="3.40.50.10190:FF:000054">
    <property type="entry name" value="DNA ligase"/>
    <property type="match status" value="1"/>
</dbReference>
<dbReference type="Gene3D" id="6.20.10.30">
    <property type="match status" value="1"/>
</dbReference>
<dbReference type="Gene3D" id="1.10.150.20">
    <property type="entry name" value="5' to 3' exonuclease, C-terminal subdomain"/>
    <property type="match status" value="2"/>
</dbReference>
<dbReference type="Gene3D" id="3.40.50.10190">
    <property type="entry name" value="BRCT domain"/>
    <property type="match status" value="1"/>
</dbReference>
<dbReference type="Gene3D" id="3.30.470.30">
    <property type="entry name" value="DNA ligase/mRNA capping enzyme"/>
    <property type="match status" value="1"/>
</dbReference>
<dbReference type="Gene3D" id="1.10.287.610">
    <property type="entry name" value="Helix hairpin bin"/>
    <property type="match status" value="1"/>
</dbReference>
<dbReference type="Gene3D" id="2.40.50.140">
    <property type="entry name" value="Nucleic acid-binding proteins"/>
    <property type="match status" value="1"/>
</dbReference>
<dbReference type="HAMAP" id="MF_01588">
    <property type="entry name" value="DNA_ligase_A"/>
    <property type="match status" value="1"/>
</dbReference>
<dbReference type="InterPro" id="IPR001357">
    <property type="entry name" value="BRCT_dom"/>
</dbReference>
<dbReference type="InterPro" id="IPR036420">
    <property type="entry name" value="BRCT_dom_sf"/>
</dbReference>
<dbReference type="InterPro" id="IPR041663">
    <property type="entry name" value="DisA/LigA_HHH"/>
</dbReference>
<dbReference type="InterPro" id="IPR001679">
    <property type="entry name" value="DNA_ligase"/>
</dbReference>
<dbReference type="InterPro" id="IPR018239">
    <property type="entry name" value="DNA_ligase_AS"/>
</dbReference>
<dbReference type="InterPro" id="IPR033136">
    <property type="entry name" value="DNA_ligase_CS"/>
</dbReference>
<dbReference type="InterPro" id="IPR013839">
    <property type="entry name" value="DNAligase_adenylation"/>
</dbReference>
<dbReference type="InterPro" id="IPR013840">
    <property type="entry name" value="DNAligase_N"/>
</dbReference>
<dbReference type="InterPro" id="IPR003583">
    <property type="entry name" value="Hlx-hairpin-Hlx_DNA-bd_motif"/>
</dbReference>
<dbReference type="InterPro" id="IPR012340">
    <property type="entry name" value="NA-bd_OB-fold"/>
</dbReference>
<dbReference type="InterPro" id="IPR004150">
    <property type="entry name" value="NAD_DNA_ligase_OB"/>
</dbReference>
<dbReference type="InterPro" id="IPR010994">
    <property type="entry name" value="RuvA_2-like"/>
</dbReference>
<dbReference type="InterPro" id="IPR004149">
    <property type="entry name" value="Znf_DNAligase_C4"/>
</dbReference>
<dbReference type="NCBIfam" id="TIGR00575">
    <property type="entry name" value="dnlj"/>
    <property type="match status" value="1"/>
</dbReference>
<dbReference type="NCBIfam" id="NF005932">
    <property type="entry name" value="PRK07956.1"/>
    <property type="match status" value="1"/>
</dbReference>
<dbReference type="PANTHER" id="PTHR23389">
    <property type="entry name" value="CHROMOSOME TRANSMISSION FIDELITY FACTOR 18"/>
    <property type="match status" value="1"/>
</dbReference>
<dbReference type="PANTHER" id="PTHR23389:SF9">
    <property type="entry name" value="DNA LIGASE"/>
    <property type="match status" value="1"/>
</dbReference>
<dbReference type="Pfam" id="PF00533">
    <property type="entry name" value="BRCT"/>
    <property type="match status" value="1"/>
</dbReference>
<dbReference type="Pfam" id="PF01653">
    <property type="entry name" value="DNA_ligase_aden"/>
    <property type="match status" value="1"/>
</dbReference>
<dbReference type="Pfam" id="PF03120">
    <property type="entry name" value="DNA_ligase_OB"/>
    <property type="match status" value="1"/>
</dbReference>
<dbReference type="Pfam" id="PF03119">
    <property type="entry name" value="DNA_ligase_ZBD"/>
    <property type="match status" value="1"/>
</dbReference>
<dbReference type="Pfam" id="PF12826">
    <property type="entry name" value="HHH_2"/>
    <property type="match status" value="1"/>
</dbReference>
<dbReference type="Pfam" id="PF14520">
    <property type="entry name" value="HHH_5"/>
    <property type="match status" value="1"/>
</dbReference>
<dbReference type="Pfam" id="PF22745">
    <property type="entry name" value="Nlig-Ia"/>
    <property type="match status" value="1"/>
</dbReference>
<dbReference type="PIRSF" id="PIRSF001604">
    <property type="entry name" value="LigA"/>
    <property type="match status" value="1"/>
</dbReference>
<dbReference type="SMART" id="SM00292">
    <property type="entry name" value="BRCT"/>
    <property type="match status" value="1"/>
</dbReference>
<dbReference type="SMART" id="SM00278">
    <property type="entry name" value="HhH1"/>
    <property type="match status" value="4"/>
</dbReference>
<dbReference type="SMART" id="SM00532">
    <property type="entry name" value="LIGANc"/>
    <property type="match status" value="1"/>
</dbReference>
<dbReference type="SUPFAM" id="SSF52113">
    <property type="entry name" value="BRCT domain"/>
    <property type="match status" value="1"/>
</dbReference>
<dbReference type="SUPFAM" id="SSF56091">
    <property type="entry name" value="DNA ligase/mRNA capping enzyme, catalytic domain"/>
    <property type="match status" value="1"/>
</dbReference>
<dbReference type="SUPFAM" id="SSF50249">
    <property type="entry name" value="Nucleic acid-binding proteins"/>
    <property type="match status" value="1"/>
</dbReference>
<dbReference type="SUPFAM" id="SSF47781">
    <property type="entry name" value="RuvA domain 2-like"/>
    <property type="match status" value="1"/>
</dbReference>
<dbReference type="PROSITE" id="PS50172">
    <property type="entry name" value="BRCT"/>
    <property type="match status" value="1"/>
</dbReference>
<dbReference type="PROSITE" id="PS01055">
    <property type="entry name" value="DNA_LIGASE_N1"/>
    <property type="match status" value="1"/>
</dbReference>
<dbReference type="PROSITE" id="PS01056">
    <property type="entry name" value="DNA_LIGASE_N2"/>
    <property type="match status" value="1"/>
</dbReference>
<protein>
    <recommendedName>
        <fullName evidence="1">DNA ligase</fullName>
        <ecNumber evidence="1">6.5.1.2</ecNumber>
    </recommendedName>
    <alternativeName>
        <fullName evidence="1">Polydeoxyribonucleotide synthase [NAD(+)]</fullName>
    </alternativeName>
</protein>
<comment type="function">
    <text evidence="1">DNA ligase that catalyzes the formation of phosphodiester linkages between 5'-phosphoryl and 3'-hydroxyl groups in double-stranded DNA using NAD as a coenzyme and as the energy source for the reaction. It is essential for DNA replication and repair of damaged DNA.</text>
</comment>
<comment type="catalytic activity">
    <reaction evidence="1">
        <text>NAD(+) + (deoxyribonucleotide)n-3'-hydroxyl + 5'-phospho-(deoxyribonucleotide)m = (deoxyribonucleotide)n+m + AMP + beta-nicotinamide D-nucleotide.</text>
        <dbReference type="EC" id="6.5.1.2"/>
    </reaction>
</comment>
<comment type="cofactor">
    <cofactor evidence="1">
        <name>Mg(2+)</name>
        <dbReference type="ChEBI" id="CHEBI:18420"/>
    </cofactor>
    <cofactor evidence="1">
        <name>Mn(2+)</name>
        <dbReference type="ChEBI" id="CHEBI:29035"/>
    </cofactor>
</comment>
<comment type="similarity">
    <text evidence="1">Belongs to the NAD-dependent DNA ligase family. LigA subfamily.</text>
</comment>
<evidence type="ECO:0000255" key="1">
    <source>
        <dbReference type="HAMAP-Rule" id="MF_01588"/>
    </source>
</evidence>
<accession>A3NAV3</accession>
<feature type="chain" id="PRO_0000313168" description="DNA ligase">
    <location>
        <begin position="1"/>
        <end position="691"/>
    </location>
</feature>
<feature type="domain" description="BRCT" evidence="1">
    <location>
        <begin position="610"/>
        <end position="691"/>
    </location>
</feature>
<feature type="active site" description="N6-AMP-lysine intermediate" evidence="1">
    <location>
        <position position="132"/>
    </location>
</feature>
<feature type="binding site" evidence="1">
    <location>
        <begin position="41"/>
        <end position="45"/>
    </location>
    <ligand>
        <name>NAD(+)</name>
        <dbReference type="ChEBI" id="CHEBI:57540"/>
    </ligand>
</feature>
<feature type="binding site" evidence="1">
    <location>
        <begin position="90"/>
        <end position="91"/>
    </location>
    <ligand>
        <name>NAD(+)</name>
        <dbReference type="ChEBI" id="CHEBI:57540"/>
    </ligand>
</feature>
<feature type="binding site" evidence="1">
    <location>
        <position position="130"/>
    </location>
    <ligand>
        <name>NAD(+)</name>
        <dbReference type="ChEBI" id="CHEBI:57540"/>
    </ligand>
</feature>
<feature type="binding site" evidence="1">
    <location>
        <position position="153"/>
    </location>
    <ligand>
        <name>NAD(+)</name>
        <dbReference type="ChEBI" id="CHEBI:57540"/>
    </ligand>
</feature>
<feature type="binding site" evidence="1">
    <location>
        <position position="190"/>
    </location>
    <ligand>
        <name>NAD(+)</name>
        <dbReference type="ChEBI" id="CHEBI:57540"/>
    </ligand>
</feature>
<feature type="binding site" evidence="1">
    <location>
        <position position="307"/>
    </location>
    <ligand>
        <name>NAD(+)</name>
        <dbReference type="ChEBI" id="CHEBI:57540"/>
    </ligand>
</feature>
<feature type="binding site" evidence="1">
    <location>
        <position position="331"/>
    </location>
    <ligand>
        <name>NAD(+)</name>
        <dbReference type="ChEBI" id="CHEBI:57540"/>
    </ligand>
</feature>
<feature type="binding site" evidence="1">
    <location>
        <position position="425"/>
    </location>
    <ligand>
        <name>Zn(2+)</name>
        <dbReference type="ChEBI" id="CHEBI:29105"/>
    </ligand>
</feature>
<feature type="binding site" evidence="1">
    <location>
        <position position="428"/>
    </location>
    <ligand>
        <name>Zn(2+)</name>
        <dbReference type="ChEBI" id="CHEBI:29105"/>
    </ligand>
</feature>
<feature type="binding site" evidence="1">
    <location>
        <position position="443"/>
    </location>
    <ligand>
        <name>Zn(2+)</name>
        <dbReference type="ChEBI" id="CHEBI:29105"/>
    </ligand>
</feature>
<feature type="binding site" evidence="1">
    <location>
        <position position="449"/>
    </location>
    <ligand>
        <name>Zn(2+)</name>
        <dbReference type="ChEBI" id="CHEBI:29105"/>
    </ligand>
</feature>
<keyword id="KW-0227">DNA damage</keyword>
<keyword id="KW-0234">DNA repair</keyword>
<keyword id="KW-0235">DNA replication</keyword>
<keyword id="KW-0436">Ligase</keyword>
<keyword id="KW-0460">Magnesium</keyword>
<keyword id="KW-0464">Manganese</keyword>
<keyword id="KW-0479">Metal-binding</keyword>
<keyword id="KW-0520">NAD</keyword>
<keyword id="KW-0862">Zinc</keyword>
<gene>
    <name evidence="1" type="primary">ligA</name>
    <name type="ordered locus">BURPS668_2442</name>
</gene>
<name>DNLJ_BURP6</name>
<organism>
    <name type="scientific">Burkholderia pseudomallei (strain 668)</name>
    <dbReference type="NCBI Taxonomy" id="320373"/>
    <lineage>
        <taxon>Bacteria</taxon>
        <taxon>Pseudomonadati</taxon>
        <taxon>Pseudomonadota</taxon>
        <taxon>Betaproteobacteria</taxon>
        <taxon>Burkholderiales</taxon>
        <taxon>Burkholderiaceae</taxon>
        <taxon>Burkholderia</taxon>
        <taxon>pseudomallei group</taxon>
    </lineage>
</organism>
<sequence length="691" mass="75596">MARSPVEPPASQPAKRAAWLRAELERANYAYYVLDQPDLPDAEYDRLFVELQRIEAEHPDLVTPDSPTQRVGGEAASGFTPVVHDKPMLSLNNGFADEDVIAFDKRVADGLDKATDLAGTVTEPVEYACELKFDGLAISLRYENGRFVQASTRGDGTTGEDVTENIRTIRAIPLTLKGKRLPRMLDVRGEVLMFKRDFARLNERQRAAGQREFANPRNAAAGSLRQLDSKITASRPLSFFAYGIGVLDGADMPDTHSGLLDWYETLGLPVNRERAVVRGAAGLLAFFHSVGERRESLPYDIDGVVYKVNRRDEQDRLGFVSRAPRFALAHKFPAQEALTKLIAIDVQVGRTGAITPVARLEPVFVGGATVTNATLHNEDEVRRKDIRIGDTVIVRRAGDVIPEVVSAVLDRRPADAQEFVMPTECPECGSRIERLPDEAIARCTGGLFCPAQRKQALWHFAQRRALDIDGLGEKIIDQLVEQNLVRTPADLFNLGFSTLVALDRFAEKSARNLIDSLEKAKHTTLARFIYALGIRHVGESTAKDLAKHFGSLDPIMDAPIDALLEVNDVGPIVAESIHQFFAEEHNRTVIEQLRARGKVTWPEGPPAPRAPQGVLAGKTVVLTGTLPTLTREAAKEMLEAAGAKVAGSVSKKTDYVVAGADAGSKLAKAEELGIPVLDEAGMHTLLEGHAR</sequence>
<reference key="1">
    <citation type="journal article" date="2010" name="Genome Biol. Evol.">
        <title>Continuing evolution of Burkholderia mallei through genome reduction and large-scale rearrangements.</title>
        <authorList>
            <person name="Losada L."/>
            <person name="Ronning C.M."/>
            <person name="DeShazer D."/>
            <person name="Woods D."/>
            <person name="Fedorova N."/>
            <person name="Kim H.S."/>
            <person name="Shabalina S.A."/>
            <person name="Pearson T.R."/>
            <person name="Brinkac L."/>
            <person name="Tan P."/>
            <person name="Nandi T."/>
            <person name="Crabtree J."/>
            <person name="Badger J."/>
            <person name="Beckstrom-Sternberg S."/>
            <person name="Saqib M."/>
            <person name="Schutzer S.E."/>
            <person name="Keim P."/>
            <person name="Nierman W.C."/>
        </authorList>
    </citation>
    <scope>NUCLEOTIDE SEQUENCE [LARGE SCALE GENOMIC DNA]</scope>
    <source>
        <strain>668</strain>
    </source>
</reference>